<evidence type="ECO:0000250" key="1"/>
<evidence type="ECO:0000255" key="2"/>
<evidence type="ECO:0000255" key="3">
    <source>
        <dbReference type="PROSITE-ProRule" id="PRU00500"/>
    </source>
</evidence>
<evidence type="ECO:0000255" key="4">
    <source>
        <dbReference type="PROSITE-ProRule" id="PRU00798"/>
    </source>
</evidence>
<evidence type="ECO:0000255" key="5">
    <source>
        <dbReference type="PROSITE-ProRule" id="PRU10142"/>
    </source>
</evidence>
<evidence type="ECO:0000269" key="6">
    <source>
    </source>
</evidence>
<evidence type="ECO:0000269" key="7">
    <source>
    </source>
</evidence>
<evidence type="ECO:0000303" key="8">
    <source>
    </source>
</evidence>
<evidence type="ECO:0000303" key="9">
    <source ref="1"/>
</evidence>
<evidence type="ECO:0000305" key="10"/>
<comment type="function">
    <text evidence="6 7">Probable regulator of osteoblast differentiation. Plays essential roles in both eye and limb development.</text>
</comment>
<comment type="subcellular location">
    <subcellularLocation>
        <location evidence="1">Secreted</location>
        <location evidence="1">Extracellular space</location>
        <location evidence="1">Extracellular matrix</location>
        <location evidence="1">Basement membrane</location>
    </subcellularLocation>
    <text evidence="1">In or around the basement membrane.</text>
</comment>
<comment type="alternative products">
    <event type="alternative splicing"/>
    <isoform>
        <id>Q8BLY1-1</id>
        <name>1</name>
        <sequence type="displayed"/>
    </isoform>
    <isoform>
        <id>Q8BLY1-2</id>
        <name>2</name>
        <sequence type="described" ref="VSP_008721"/>
    </isoform>
</comment>
<comment type="tissue specificity">
    <text>Widely expressed in many tissues with a strongest signal in ovary.</text>
</comment>
<comment type="developmental stage">
    <text evidence="6 7">Found in the forebrain, midbrain, hindbrain, pharyngeal arch, somites, and forelimb buds at day 9.5 dpc. At day 10.5 dpc, strongly expressed in dorsal neural tube, developing pharyngeal arches and frontonasal region with low expression in the ectoderm overlying the developing optic vesicle, expression can be observed in the optic stalk. At 11.5 dpc it is localized to the closure site of the optic cup. In developing limbs between days 10.5 dpc and 11.5 dpc, it is found in both dorsal and ventral regions, but expression is predominant dorsal in hindlimb bud and not detected in the most anterior, posterior, and distal parts of limb buds. Expression coinciding with chondrogenic condensation can be observed at 12.5 dpc. Expression is restricted to future synovial joint regions at day 13.5 dpc.</text>
</comment>
<comment type="PTM">
    <text evidence="1">Glycosylated.</text>
</comment>
<comment type="disruption phenotype">
    <text evidence="6">Null mice present with a phenotype resembling human microphthalmia with limb anomalies. The phenotype includes aplasia or hypoplasia of optic nerves, hypoplastic fibula and bowed tibia, and syndactyly in limbs. A thinned and irregular ganglion cell layer and atrophy of the anteroventral part of the retina is observed.</text>
</comment>
<dbReference type="EMBL" id="AF070470">
    <property type="protein sequence ID" value="AAD41590.1"/>
    <property type="molecule type" value="mRNA"/>
</dbReference>
<dbReference type="EMBL" id="AK040931">
    <property type="protein sequence ID" value="BAC30750.1"/>
    <property type="molecule type" value="mRNA"/>
</dbReference>
<dbReference type="EMBL" id="BC031804">
    <property type="protein sequence ID" value="AAH31804.1"/>
    <property type="molecule type" value="mRNA"/>
</dbReference>
<dbReference type="CCDS" id="CCDS26017.1">
    <molecule id="Q8BLY1-2"/>
</dbReference>
<dbReference type="CCDS" id="CCDS49102.1">
    <molecule id="Q8BLY1-1"/>
</dbReference>
<dbReference type="RefSeq" id="NP_001139689.1">
    <property type="nucleotide sequence ID" value="NM_001146217.1"/>
</dbReference>
<dbReference type="RefSeq" id="NP_071711.2">
    <property type="nucleotide sequence ID" value="NM_022316.2"/>
</dbReference>
<dbReference type="FunCoup" id="Q8BLY1">
    <property type="interactions" value="289"/>
</dbReference>
<dbReference type="STRING" id="10090.ENSMUSP00000105976"/>
<dbReference type="GlyCosmos" id="Q8BLY1">
    <property type="glycosylation" value="2 sites, No reported glycans"/>
</dbReference>
<dbReference type="GlyGen" id="Q8BLY1">
    <property type="glycosylation" value="3 sites, 2 N-linked glycans (2 sites)"/>
</dbReference>
<dbReference type="iPTMnet" id="Q8BLY1"/>
<dbReference type="PhosphoSitePlus" id="Q8BLY1"/>
<dbReference type="PaxDb" id="10090-ENSMUSP00000105976"/>
<dbReference type="ProteomicsDB" id="261443">
    <molecule id="Q8BLY1-1"/>
</dbReference>
<dbReference type="ProteomicsDB" id="261444">
    <molecule id="Q8BLY1-2"/>
</dbReference>
<dbReference type="Pumba" id="Q8BLY1"/>
<dbReference type="DNASU" id="64075"/>
<dbReference type="GeneID" id="64075"/>
<dbReference type="KEGG" id="mmu:64075"/>
<dbReference type="UCSC" id="uc007obu.2">
    <molecule id="Q8BLY1-1"/>
    <property type="organism name" value="mouse"/>
</dbReference>
<dbReference type="AGR" id="MGI:1929878"/>
<dbReference type="CTD" id="64093"/>
<dbReference type="MGI" id="MGI:1929878">
    <property type="gene designation" value="Smoc1"/>
</dbReference>
<dbReference type="eggNOG" id="KOG4578">
    <property type="taxonomic scope" value="Eukaryota"/>
</dbReference>
<dbReference type="InParanoid" id="Q8BLY1"/>
<dbReference type="OrthoDB" id="5986054at2759"/>
<dbReference type="PhylomeDB" id="Q8BLY1"/>
<dbReference type="TreeFam" id="TF320666"/>
<dbReference type="BioGRID-ORCS" id="64075">
    <property type="hits" value="1 hit in 60 CRISPR screens"/>
</dbReference>
<dbReference type="ChiTaRS" id="Smoc1">
    <property type="organism name" value="mouse"/>
</dbReference>
<dbReference type="PRO" id="PR:Q8BLY1"/>
<dbReference type="Proteomes" id="UP000000589">
    <property type="component" value="Unplaced"/>
</dbReference>
<dbReference type="RNAct" id="Q8BLY1">
    <property type="molecule type" value="protein"/>
</dbReference>
<dbReference type="GO" id="GO:0005604">
    <property type="term" value="C:basement membrane"/>
    <property type="evidence" value="ECO:0000314"/>
    <property type="project" value="MGI"/>
</dbReference>
<dbReference type="GO" id="GO:0005576">
    <property type="term" value="C:extracellular region"/>
    <property type="evidence" value="ECO:0007669"/>
    <property type="project" value="UniProtKB-KW"/>
</dbReference>
<dbReference type="GO" id="GO:0005509">
    <property type="term" value="F:calcium ion binding"/>
    <property type="evidence" value="ECO:0007669"/>
    <property type="project" value="InterPro"/>
</dbReference>
<dbReference type="GO" id="GO:0050840">
    <property type="term" value="F:extracellular matrix binding"/>
    <property type="evidence" value="ECO:0000314"/>
    <property type="project" value="MGI"/>
</dbReference>
<dbReference type="GO" id="GO:0030154">
    <property type="term" value="P:cell differentiation"/>
    <property type="evidence" value="ECO:0007669"/>
    <property type="project" value="UniProtKB-KW"/>
</dbReference>
<dbReference type="GO" id="GO:0030198">
    <property type="term" value="P:extracellular matrix organization"/>
    <property type="evidence" value="ECO:0000314"/>
    <property type="project" value="MGI"/>
</dbReference>
<dbReference type="GO" id="GO:0001654">
    <property type="term" value="P:eye development"/>
    <property type="evidence" value="ECO:0000315"/>
    <property type="project" value="UniProtKB"/>
</dbReference>
<dbReference type="GO" id="GO:0060173">
    <property type="term" value="P:limb development"/>
    <property type="evidence" value="ECO:0000315"/>
    <property type="project" value="UniProtKB"/>
</dbReference>
<dbReference type="GO" id="GO:0010811">
    <property type="term" value="P:positive regulation of cell-substrate adhesion"/>
    <property type="evidence" value="ECO:0000314"/>
    <property type="project" value="MGI"/>
</dbReference>
<dbReference type="CDD" id="cd16240">
    <property type="entry name" value="EFh_SPARC_SMOC1"/>
    <property type="match status" value="1"/>
</dbReference>
<dbReference type="CDD" id="cd00104">
    <property type="entry name" value="KAZAL_FS"/>
    <property type="match status" value="1"/>
</dbReference>
<dbReference type="CDD" id="cd00191">
    <property type="entry name" value="TY"/>
    <property type="match status" value="2"/>
</dbReference>
<dbReference type="FunFam" id="1.10.238.10:FF:000076">
    <property type="entry name" value="SPARC-related modular calcium binding protein 1"/>
    <property type="match status" value="1"/>
</dbReference>
<dbReference type="FunFam" id="3.30.60.30:FF:000012">
    <property type="entry name" value="SPARC-related modular calcium binding protein 1"/>
    <property type="match status" value="1"/>
</dbReference>
<dbReference type="FunFam" id="4.10.800.10:FF:000004">
    <property type="entry name" value="SPARC-related modular calcium-binding protein 1"/>
    <property type="match status" value="1"/>
</dbReference>
<dbReference type="FunFam" id="4.10.800.10:FF:000003">
    <property type="entry name" value="SPARC-related modular calcium-binding protein 2 isoform 1"/>
    <property type="match status" value="1"/>
</dbReference>
<dbReference type="Gene3D" id="3.30.60.30">
    <property type="match status" value="1"/>
</dbReference>
<dbReference type="Gene3D" id="1.10.238.10">
    <property type="entry name" value="EF-hand"/>
    <property type="match status" value="1"/>
</dbReference>
<dbReference type="Gene3D" id="4.10.800.10">
    <property type="entry name" value="Thyroglobulin type-1"/>
    <property type="match status" value="2"/>
</dbReference>
<dbReference type="InterPro" id="IPR051950">
    <property type="entry name" value="Dev_reg/Prot_inhib"/>
</dbReference>
<dbReference type="InterPro" id="IPR011992">
    <property type="entry name" value="EF-hand-dom_pair"/>
</dbReference>
<dbReference type="InterPro" id="IPR018247">
    <property type="entry name" value="EF_Hand_1_Ca_BS"/>
</dbReference>
<dbReference type="InterPro" id="IPR002350">
    <property type="entry name" value="Kazal_dom"/>
</dbReference>
<dbReference type="InterPro" id="IPR036058">
    <property type="entry name" value="Kazal_dom_sf"/>
</dbReference>
<dbReference type="InterPro" id="IPR037639">
    <property type="entry name" value="SMOC1_EC"/>
</dbReference>
<dbReference type="InterPro" id="IPR019577">
    <property type="entry name" value="SPARC/Testican_Ca-bd-dom"/>
</dbReference>
<dbReference type="InterPro" id="IPR000716">
    <property type="entry name" value="Thyroglobulin_1"/>
</dbReference>
<dbReference type="InterPro" id="IPR036857">
    <property type="entry name" value="Thyroglobulin_1_sf"/>
</dbReference>
<dbReference type="PANTHER" id="PTHR12352">
    <property type="entry name" value="SECRETED MODULAR CALCIUM-BINDING PROTEIN"/>
    <property type="match status" value="1"/>
</dbReference>
<dbReference type="PANTHER" id="PTHR12352:SF13">
    <property type="entry name" value="SPARC-RELATED MODULAR CALCIUM-BINDING PROTEIN 1"/>
    <property type="match status" value="1"/>
</dbReference>
<dbReference type="Pfam" id="PF07648">
    <property type="entry name" value="Kazal_2"/>
    <property type="match status" value="1"/>
</dbReference>
<dbReference type="Pfam" id="PF10591">
    <property type="entry name" value="SPARC_Ca_bdg"/>
    <property type="match status" value="1"/>
</dbReference>
<dbReference type="Pfam" id="PF16597">
    <property type="entry name" value="Thyroglob_assoc"/>
    <property type="match status" value="1"/>
</dbReference>
<dbReference type="Pfam" id="PF00086">
    <property type="entry name" value="Thyroglobulin_1"/>
    <property type="match status" value="2"/>
</dbReference>
<dbReference type="SMART" id="SM00280">
    <property type="entry name" value="KAZAL"/>
    <property type="match status" value="1"/>
</dbReference>
<dbReference type="SMART" id="SM00211">
    <property type="entry name" value="TY"/>
    <property type="match status" value="2"/>
</dbReference>
<dbReference type="SUPFAM" id="SSF47473">
    <property type="entry name" value="EF-hand"/>
    <property type="match status" value="1"/>
</dbReference>
<dbReference type="SUPFAM" id="SSF100895">
    <property type="entry name" value="Kazal-type serine protease inhibitors"/>
    <property type="match status" value="1"/>
</dbReference>
<dbReference type="SUPFAM" id="SSF57610">
    <property type="entry name" value="Thyroglobulin type-1 domain"/>
    <property type="match status" value="2"/>
</dbReference>
<dbReference type="PROSITE" id="PS00018">
    <property type="entry name" value="EF_HAND_1"/>
    <property type="match status" value="2"/>
</dbReference>
<dbReference type="PROSITE" id="PS51465">
    <property type="entry name" value="KAZAL_2"/>
    <property type="match status" value="1"/>
</dbReference>
<dbReference type="PROSITE" id="PS00484">
    <property type="entry name" value="THYROGLOBULIN_1_1"/>
    <property type="match status" value="2"/>
</dbReference>
<dbReference type="PROSITE" id="PS51162">
    <property type="entry name" value="THYROGLOBULIN_1_2"/>
    <property type="match status" value="2"/>
</dbReference>
<feature type="signal peptide" evidence="2">
    <location>
        <begin position="1"/>
        <end position="25"/>
    </location>
</feature>
<feature type="chain" id="PRO_0000020317" description="SPARC-related modular calcium-binding protein 1">
    <location>
        <begin position="26"/>
        <end position="463"/>
    </location>
</feature>
<feature type="domain" description="Kazal-like" evidence="4">
    <location>
        <begin position="36"/>
        <end position="88"/>
    </location>
</feature>
<feature type="domain" description="Thyroglobulin type-1 1" evidence="3">
    <location>
        <begin position="91"/>
        <end position="157"/>
    </location>
</feature>
<feature type="domain" description="Thyroglobulin type-1 2" evidence="3">
    <location>
        <begin position="234"/>
        <end position="302"/>
    </location>
</feature>
<feature type="domain" description="EF-hand 1">
    <location>
        <begin position="369"/>
        <end position="404"/>
    </location>
</feature>
<feature type="domain" description="EF-hand 2">
    <location>
        <begin position="406"/>
        <end position="441"/>
    </location>
</feature>
<feature type="binding site" evidence="5">
    <location>
        <position position="382"/>
    </location>
    <ligand>
        <name>Ca(2+)</name>
        <dbReference type="ChEBI" id="CHEBI:29108"/>
        <label>1</label>
    </ligand>
</feature>
<feature type="binding site" evidence="5">
    <location>
        <position position="384"/>
    </location>
    <ligand>
        <name>Ca(2+)</name>
        <dbReference type="ChEBI" id="CHEBI:29108"/>
        <label>1</label>
    </ligand>
</feature>
<feature type="binding site" evidence="5">
    <location>
        <position position="386"/>
    </location>
    <ligand>
        <name>Ca(2+)</name>
        <dbReference type="ChEBI" id="CHEBI:29108"/>
        <label>1</label>
    </ligand>
</feature>
<feature type="binding site" evidence="5">
    <location>
        <position position="388"/>
    </location>
    <ligand>
        <name>Ca(2+)</name>
        <dbReference type="ChEBI" id="CHEBI:29108"/>
        <label>1</label>
    </ligand>
</feature>
<feature type="binding site" evidence="5">
    <location>
        <position position="393"/>
    </location>
    <ligand>
        <name>Ca(2+)</name>
        <dbReference type="ChEBI" id="CHEBI:29108"/>
        <label>1</label>
    </ligand>
</feature>
<feature type="binding site" evidence="5">
    <location>
        <position position="419"/>
    </location>
    <ligand>
        <name>Ca(2+)</name>
        <dbReference type="ChEBI" id="CHEBI:29108"/>
        <label>2</label>
    </ligand>
</feature>
<feature type="binding site" evidence="5">
    <location>
        <position position="421"/>
    </location>
    <ligand>
        <name>Ca(2+)</name>
        <dbReference type="ChEBI" id="CHEBI:29108"/>
        <label>2</label>
    </ligand>
</feature>
<feature type="binding site" evidence="5">
    <location>
        <position position="423"/>
    </location>
    <ligand>
        <name>Ca(2+)</name>
        <dbReference type="ChEBI" id="CHEBI:29108"/>
        <label>2</label>
    </ligand>
</feature>
<feature type="binding site" evidence="5">
    <location>
        <position position="430"/>
    </location>
    <ligand>
        <name>Ca(2+)</name>
        <dbReference type="ChEBI" id="CHEBI:29108"/>
        <label>2</label>
    </ligand>
</feature>
<feature type="glycosylation site" description="N-linked (GlcNAc...) asparagine" evidence="2">
    <location>
        <position position="224"/>
    </location>
</feature>
<feature type="glycosylation site" description="N-linked (GlcNAc...) asparagine" evidence="2">
    <location>
        <position position="384"/>
    </location>
</feature>
<feature type="disulfide bond" evidence="4">
    <location>
        <begin position="42"/>
        <end position="73"/>
    </location>
</feature>
<feature type="disulfide bond" evidence="4">
    <location>
        <begin position="46"/>
        <end position="66"/>
    </location>
</feature>
<feature type="disulfide bond" evidence="4">
    <location>
        <begin position="55"/>
        <end position="86"/>
    </location>
</feature>
<feature type="disulfide bond" evidence="1">
    <location>
        <begin position="94"/>
        <end position="117"/>
    </location>
</feature>
<feature type="disulfide bond" evidence="1">
    <location>
        <begin position="128"/>
        <end position="135"/>
    </location>
</feature>
<feature type="disulfide bond" evidence="1">
    <location>
        <begin position="137"/>
        <end position="157"/>
    </location>
</feature>
<feature type="disulfide bond" evidence="1">
    <location>
        <begin position="237"/>
        <end position="261"/>
    </location>
</feature>
<feature type="disulfide bond" evidence="1">
    <location>
        <begin position="272"/>
        <end position="279"/>
    </location>
</feature>
<feature type="disulfide bond" evidence="1">
    <location>
        <begin position="281"/>
        <end position="302"/>
    </location>
</feature>
<feature type="splice variant" id="VSP_008721" description="In isoform 2." evidence="8 9">
    <location>
        <begin position="175"/>
        <end position="185"/>
    </location>
</feature>
<feature type="sequence conflict" description="In Ref. 2; BAC30750." evidence="10" ref="2">
    <original>V</original>
    <variation>I</variation>
    <location>
        <position position="311"/>
    </location>
</feature>
<reference key="1">
    <citation type="submission" date="1998-06" db="EMBL/GenBank/DDBJ databases">
        <title>A Sparc-related gene (SRG).</title>
        <authorList>
            <person name="Poleev A."/>
            <person name="Plachov D."/>
        </authorList>
    </citation>
    <scope>NUCLEOTIDE SEQUENCE [MRNA] (ISOFORM 2)</scope>
    <source>
        <strain>129/Sv</strain>
    </source>
</reference>
<reference key="2">
    <citation type="journal article" date="2005" name="Science">
        <title>The transcriptional landscape of the mammalian genome.</title>
        <authorList>
            <person name="Carninci P."/>
            <person name="Kasukawa T."/>
            <person name="Katayama S."/>
            <person name="Gough J."/>
            <person name="Frith M.C."/>
            <person name="Maeda N."/>
            <person name="Oyama R."/>
            <person name="Ravasi T."/>
            <person name="Lenhard B."/>
            <person name="Wells C."/>
            <person name="Kodzius R."/>
            <person name="Shimokawa K."/>
            <person name="Bajic V.B."/>
            <person name="Brenner S.E."/>
            <person name="Batalov S."/>
            <person name="Forrest A.R."/>
            <person name="Zavolan M."/>
            <person name="Davis M.J."/>
            <person name="Wilming L.G."/>
            <person name="Aidinis V."/>
            <person name="Allen J.E."/>
            <person name="Ambesi-Impiombato A."/>
            <person name="Apweiler R."/>
            <person name="Aturaliya R.N."/>
            <person name="Bailey T.L."/>
            <person name="Bansal M."/>
            <person name="Baxter L."/>
            <person name="Beisel K.W."/>
            <person name="Bersano T."/>
            <person name="Bono H."/>
            <person name="Chalk A.M."/>
            <person name="Chiu K.P."/>
            <person name="Choudhary V."/>
            <person name="Christoffels A."/>
            <person name="Clutterbuck D.R."/>
            <person name="Crowe M.L."/>
            <person name="Dalla E."/>
            <person name="Dalrymple B.P."/>
            <person name="de Bono B."/>
            <person name="Della Gatta G."/>
            <person name="di Bernardo D."/>
            <person name="Down T."/>
            <person name="Engstrom P."/>
            <person name="Fagiolini M."/>
            <person name="Faulkner G."/>
            <person name="Fletcher C.F."/>
            <person name="Fukushima T."/>
            <person name="Furuno M."/>
            <person name="Futaki S."/>
            <person name="Gariboldi M."/>
            <person name="Georgii-Hemming P."/>
            <person name="Gingeras T.R."/>
            <person name="Gojobori T."/>
            <person name="Green R.E."/>
            <person name="Gustincich S."/>
            <person name="Harbers M."/>
            <person name="Hayashi Y."/>
            <person name="Hensch T.K."/>
            <person name="Hirokawa N."/>
            <person name="Hill D."/>
            <person name="Huminiecki L."/>
            <person name="Iacono M."/>
            <person name="Ikeo K."/>
            <person name="Iwama A."/>
            <person name="Ishikawa T."/>
            <person name="Jakt M."/>
            <person name="Kanapin A."/>
            <person name="Katoh M."/>
            <person name="Kawasawa Y."/>
            <person name="Kelso J."/>
            <person name="Kitamura H."/>
            <person name="Kitano H."/>
            <person name="Kollias G."/>
            <person name="Krishnan S.P."/>
            <person name="Kruger A."/>
            <person name="Kummerfeld S.K."/>
            <person name="Kurochkin I.V."/>
            <person name="Lareau L.F."/>
            <person name="Lazarevic D."/>
            <person name="Lipovich L."/>
            <person name="Liu J."/>
            <person name="Liuni S."/>
            <person name="McWilliam S."/>
            <person name="Madan Babu M."/>
            <person name="Madera M."/>
            <person name="Marchionni L."/>
            <person name="Matsuda H."/>
            <person name="Matsuzawa S."/>
            <person name="Miki H."/>
            <person name="Mignone F."/>
            <person name="Miyake S."/>
            <person name="Morris K."/>
            <person name="Mottagui-Tabar S."/>
            <person name="Mulder N."/>
            <person name="Nakano N."/>
            <person name="Nakauchi H."/>
            <person name="Ng P."/>
            <person name="Nilsson R."/>
            <person name="Nishiguchi S."/>
            <person name="Nishikawa S."/>
            <person name="Nori F."/>
            <person name="Ohara O."/>
            <person name="Okazaki Y."/>
            <person name="Orlando V."/>
            <person name="Pang K.C."/>
            <person name="Pavan W.J."/>
            <person name="Pavesi G."/>
            <person name="Pesole G."/>
            <person name="Petrovsky N."/>
            <person name="Piazza S."/>
            <person name="Reed J."/>
            <person name="Reid J.F."/>
            <person name="Ring B.Z."/>
            <person name="Ringwald M."/>
            <person name="Rost B."/>
            <person name="Ruan Y."/>
            <person name="Salzberg S.L."/>
            <person name="Sandelin A."/>
            <person name="Schneider C."/>
            <person name="Schoenbach C."/>
            <person name="Sekiguchi K."/>
            <person name="Semple C.A."/>
            <person name="Seno S."/>
            <person name="Sessa L."/>
            <person name="Sheng Y."/>
            <person name="Shibata Y."/>
            <person name="Shimada H."/>
            <person name="Shimada K."/>
            <person name="Silva D."/>
            <person name="Sinclair B."/>
            <person name="Sperling S."/>
            <person name="Stupka E."/>
            <person name="Sugiura K."/>
            <person name="Sultana R."/>
            <person name="Takenaka Y."/>
            <person name="Taki K."/>
            <person name="Tammoja K."/>
            <person name="Tan S.L."/>
            <person name="Tang S."/>
            <person name="Taylor M.S."/>
            <person name="Tegner J."/>
            <person name="Teichmann S.A."/>
            <person name="Ueda H.R."/>
            <person name="van Nimwegen E."/>
            <person name="Verardo R."/>
            <person name="Wei C.L."/>
            <person name="Yagi K."/>
            <person name="Yamanishi H."/>
            <person name="Zabarovsky E."/>
            <person name="Zhu S."/>
            <person name="Zimmer A."/>
            <person name="Hide W."/>
            <person name="Bult C."/>
            <person name="Grimmond S.M."/>
            <person name="Teasdale R.D."/>
            <person name="Liu E.T."/>
            <person name="Brusic V."/>
            <person name="Quackenbush J."/>
            <person name="Wahlestedt C."/>
            <person name="Mattick J.S."/>
            <person name="Hume D.A."/>
            <person name="Kai C."/>
            <person name="Sasaki D."/>
            <person name="Tomaru Y."/>
            <person name="Fukuda S."/>
            <person name="Kanamori-Katayama M."/>
            <person name="Suzuki M."/>
            <person name="Aoki J."/>
            <person name="Arakawa T."/>
            <person name="Iida J."/>
            <person name="Imamura K."/>
            <person name="Itoh M."/>
            <person name="Kato T."/>
            <person name="Kawaji H."/>
            <person name="Kawagashira N."/>
            <person name="Kawashima T."/>
            <person name="Kojima M."/>
            <person name="Kondo S."/>
            <person name="Konno H."/>
            <person name="Nakano K."/>
            <person name="Ninomiya N."/>
            <person name="Nishio T."/>
            <person name="Okada M."/>
            <person name="Plessy C."/>
            <person name="Shibata K."/>
            <person name="Shiraki T."/>
            <person name="Suzuki S."/>
            <person name="Tagami M."/>
            <person name="Waki K."/>
            <person name="Watahiki A."/>
            <person name="Okamura-Oho Y."/>
            <person name="Suzuki H."/>
            <person name="Kawai J."/>
            <person name="Hayashizaki Y."/>
        </authorList>
    </citation>
    <scope>NUCLEOTIDE SEQUENCE [LARGE SCALE MRNA] (ISOFORM 1)</scope>
    <source>
        <strain>C57BL/6J</strain>
        <tissue>Aorta</tissue>
        <tissue>Vein</tissue>
    </source>
</reference>
<reference key="3">
    <citation type="journal article" date="2004" name="Genome Res.">
        <title>The status, quality, and expansion of the NIH full-length cDNA project: the Mammalian Gene Collection (MGC).</title>
        <authorList>
            <consortium name="The MGC Project Team"/>
        </authorList>
    </citation>
    <scope>NUCLEOTIDE SEQUENCE [LARGE SCALE MRNA] (ISOFORM 2)</scope>
    <source>
        <tissue>Mammary tumor</tissue>
    </source>
</reference>
<reference key="4">
    <citation type="journal article" date="2011" name="Am. J. Hum. Genet.">
        <title>SMOC1 is essential for ocular and limb development in humans and mice.</title>
        <authorList>
            <person name="Okada I."/>
            <person name="Hamanoue H."/>
            <person name="Terada K."/>
            <person name="Tohma T."/>
            <person name="Megarbane A."/>
            <person name="Chouery E."/>
            <person name="Abou-Ghoch J."/>
            <person name="Jalkh N."/>
            <person name="Cogulu O."/>
            <person name="Ozkinay F."/>
            <person name="Horie K."/>
            <person name="Takeda J."/>
            <person name="Furuichi T."/>
            <person name="Ikegawa S."/>
            <person name="Nishiyama K."/>
            <person name="Miyatake S."/>
            <person name="Nishimura A."/>
            <person name="Mizuguchi T."/>
            <person name="Niikawa N."/>
            <person name="Hirahara F."/>
            <person name="Kaname T."/>
            <person name="Yoshiura K."/>
            <person name="Tsurusaki Y."/>
            <person name="Doi H."/>
            <person name="Miyake N."/>
            <person name="Furukawa T."/>
            <person name="Matsumoto N."/>
            <person name="Saitsu H."/>
        </authorList>
    </citation>
    <scope>FUNCTION</scope>
    <scope>DEVELOPMENTAL STAGE</scope>
    <scope>DISRUPTION PHENOTYPE</scope>
</reference>
<reference key="5">
    <citation type="journal article" date="2011" name="PLoS Genet.">
        <title>Loss of the BMP antagonist, SMOC-1, causes Ophthalmo-acromelic (Waardenburg Anophthalmia) syndrome in humans and mice.</title>
        <authorList>
            <person name="Rainger J."/>
            <person name="van Beusekom E."/>
            <person name="Ramsay J.K."/>
            <person name="McKie L."/>
            <person name="Al-Gazali L."/>
            <person name="Pallotta R."/>
            <person name="Saponari A."/>
            <person name="Branney P."/>
            <person name="Fisher M."/>
            <person name="Morrison H."/>
            <person name="Bicknell L."/>
            <person name="Gautier P."/>
            <person name="Perry P."/>
            <person name="Sokhi K."/>
            <person name="Sexton D."/>
            <person name="Bardakjian T.M."/>
            <person name="Schneider A.S."/>
            <person name="Elcioglu N."/>
            <person name="Ozkinay F."/>
            <person name="Koenig R."/>
            <person name="Megarbane A."/>
            <person name="Semerci C.N."/>
            <person name="Khan A."/>
            <person name="Zafar S."/>
            <person name="Hennekam R."/>
            <person name="Sousa S.B."/>
            <person name="Ramos L."/>
            <person name="Garavelli L."/>
            <person name="Furga A.S."/>
            <person name="Wischmeijer A."/>
            <person name="Jackson I.J."/>
            <person name="Gillessen-Kaesbach G."/>
            <person name="Brunner H.G."/>
            <person name="Wieczorek D."/>
            <person name="van Bokhoven H."/>
            <person name="Fitzpatrick D.R."/>
        </authorList>
    </citation>
    <scope>FUNCTION</scope>
    <scope>DEVELOPMENTAL STAGE</scope>
</reference>
<sequence length="463" mass="51076">MLPARVRLLTPHLLLVLVQLSPAGGHRTTGPRFLISDRDPPCNPHCPRTQPKPICASDGRSYESMCEYQRAKCRDPALAVVHRGRCKDAGQSKCRLERAQALEQAKKPQEAVFVPECGEDGSFTQVQCHTYTGYCWCVTPDGKPISGSSVQNKTPVCSGPVTDKPLSQGNSGRKVSFRFFLTLNSDDGSKPTPTMETQPVFDGDEITAPTLWIKHLVIKDSKLNNTNVRNSEKVHSCDQERQSALEEARQNPREGIVIPECAPGGLYKPVQCHQSTGYCWCVLVDTGRPLPGTSTRYVMPSCESDARAKSVEADDPFKDRELPGCPEGKKMEFITSLLDALTTDMVQAINSAAPTGGGRFSEPDPSHTLEERVAHWYFSQLDSNSSDDINKREMKPFKRYVKKKAKPKKCARRFTDYCDLNKDKVISLPELKGCLGVSKEGGSLGSFPQGKRAGTNPFIGRLV</sequence>
<protein>
    <recommendedName>
        <fullName>SPARC-related modular calcium-binding protein 1</fullName>
    </recommendedName>
    <alternativeName>
        <fullName>SPARC-related gene protein</fullName>
    </alternativeName>
    <alternativeName>
        <fullName>Secreted modular calcium-binding protein 1</fullName>
        <shortName>SMOC-1</shortName>
    </alternativeName>
</protein>
<accession>Q8BLY1</accession>
<accession>Q9WVN9</accession>
<keyword id="KW-0025">Alternative splicing</keyword>
<keyword id="KW-0084">Basement membrane</keyword>
<keyword id="KW-0106">Calcium</keyword>
<keyword id="KW-0217">Developmental protein</keyword>
<keyword id="KW-0221">Differentiation</keyword>
<keyword id="KW-1015">Disulfide bond</keyword>
<keyword id="KW-0272">Extracellular matrix</keyword>
<keyword id="KW-0325">Glycoprotein</keyword>
<keyword id="KW-0479">Metal-binding</keyword>
<keyword id="KW-1185">Reference proteome</keyword>
<keyword id="KW-0677">Repeat</keyword>
<keyword id="KW-0964">Secreted</keyword>
<keyword id="KW-0732">Signal</keyword>
<proteinExistence type="evidence at transcript level"/>
<name>SMOC1_MOUSE</name>
<organism>
    <name type="scientific">Mus musculus</name>
    <name type="common">Mouse</name>
    <dbReference type="NCBI Taxonomy" id="10090"/>
    <lineage>
        <taxon>Eukaryota</taxon>
        <taxon>Metazoa</taxon>
        <taxon>Chordata</taxon>
        <taxon>Craniata</taxon>
        <taxon>Vertebrata</taxon>
        <taxon>Euteleostomi</taxon>
        <taxon>Mammalia</taxon>
        <taxon>Eutheria</taxon>
        <taxon>Euarchontoglires</taxon>
        <taxon>Glires</taxon>
        <taxon>Rodentia</taxon>
        <taxon>Myomorpha</taxon>
        <taxon>Muroidea</taxon>
        <taxon>Muridae</taxon>
        <taxon>Murinae</taxon>
        <taxon>Mus</taxon>
        <taxon>Mus</taxon>
    </lineage>
</organism>
<gene>
    <name type="primary">Smoc1</name>
    <name type="synonym">Srg</name>
</gene>